<feature type="chain" id="PRO_0000061490" description="Cytochrome b">
    <location>
        <begin position="1"/>
        <end position="379"/>
    </location>
</feature>
<feature type="transmembrane region" description="Helical" evidence="2">
    <location>
        <begin position="33"/>
        <end position="53"/>
    </location>
</feature>
<feature type="transmembrane region" description="Helical" evidence="2">
    <location>
        <begin position="77"/>
        <end position="98"/>
    </location>
</feature>
<feature type="transmembrane region" description="Helical" evidence="2">
    <location>
        <begin position="113"/>
        <end position="133"/>
    </location>
</feature>
<feature type="transmembrane region" description="Helical" evidence="2">
    <location>
        <begin position="178"/>
        <end position="198"/>
    </location>
</feature>
<feature type="transmembrane region" description="Helical" evidence="2">
    <location>
        <begin position="226"/>
        <end position="246"/>
    </location>
</feature>
<feature type="transmembrane region" description="Helical" evidence="2">
    <location>
        <begin position="288"/>
        <end position="308"/>
    </location>
</feature>
<feature type="transmembrane region" description="Helical" evidence="2">
    <location>
        <begin position="320"/>
        <end position="340"/>
    </location>
</feature>
<feature type="transmembrane region" description="Helical" evidence="2">
    <location>
        <begin position="347"/>
        <end position="367"/>
    </location>
</feature>
<feature type="binding site" description="axial binding residue" evidence="2">
    <location>
        <position position="83"/>
    </location>
    <ligand>
        <name>heme b</name>
        <dbReference type="ChEBI" id="CHEBI:60344"/>
        <label>b562</label>
    </ligand>
    <ligandPart>
        <name>Fe</name>
        <dbReference type="ChEBI" id="CHEBI:18248"/>
    </ligandPart>
</feature>
<feature type="binding site" description="axial binding residue" evidence="2">
    <location>
        <position position="97"/>
    </location>
    <ligand>
        <name>heme b</name>
        <dbReference type="ChEBI" id="CHEBI:60344"/>
        <label>b566</label>
    </ligand>
    <ligandPart>
        <name>Fe</name>
        <dbReference type="ChEBI" id="CHEBI:18248"/>
    </ligandPart>
</feature>
<feature type="binding site" description="axial binding residue" evidence="2">
    <location>
        <position position="182"/>
    </location>
    <ligand>
        <name>heme b</name>
        <dbReference type="ChEBI" id="CHEBI:60344"/>
        <label>b562</label>
    </ligand>
    <ligandPart>
        <name>Fe</name>
        <dbReference type="ChEBI" id="CHEBI:18248"/>
    </ligandPart>
</feature>
<feature type="binding site" description="axial binding residue" evidence="2">
    <location>
        <position position="196"/>
    </location>
    <ligand>
        <name>heme b</name>
        <dbReference type="ChEBI" id="CHEBI:60344"/>
        <label>b566</label>
    </ligand>
    <ligandPart>
        <name>Fe</name>
        <dbReference type="ChEBI" id="CHEBI:18248"/>
    </ligandPart>
</feature>
<feature type="binding site" evidence="2">
    <location>
        <position position="201"/>
    </location>
    <ligand>
        <name>a ubiquinone</name>
        <dbReference type="ChEBI" id="CHEBI:16389"/>
    </ligand>
</feature>
<reference key="1">
    <citation type="journal article" date="1999" name="Mol. Phylogenet. Evol.">
        <title>Cytochrome b phylogeny of the family bovidae: resolution within the alcelaphini, antilopini, neotragini, and tragelaphini.</title>
        <authorList>
            <person name="Matthee C.A."/>
            <person name="Robinson T.J."/>
        </authorList>
    </citation>
    <scope>NUCLEOTIDE SEQUENCE [GENOMIC DNA]</scope>
</reference>
<organism>
    <name type="scientific">Raphicerus sharpei</name>
    <name type="common">Sharpe's grysbok</name>
    <dbReference type="NCBI Taxonomy" id="66436"/>
    <lineage>
        <taxon>Eukaryota</taxon>
        <taxon>Metazoa</taxon>
        <taxon>Chordata</taxon>
        <taxon>Craniata</taxon>
        <taxon>Vertebrata</taxon>
        <taxon>Euteleostomi</taxon>
        <taxon>Mammalia</taxon>
        <taxon>Eutheria</taxon>
        <taxon>Laurasiatheria</taxon>
        <taxon>Artiodactyla</taxon>
        <taxon>Ruminantia</taxon>
        <taxon>Pecora</taxon>
        <taxon>Bovidae</taxon>
        <taxon>Antilopinae</taxon>
        <taxon>Raphicerus</taxon>
    </lineage>
</organism>
<keyword id="KW-0249">Electron transport</keyword>
<keyword id="KW-0349">Heme</keyword>
<keyword id="KW-0408">Iron</keyword>
<keyword id="KW-0472">Membrane</keyword>
<keyword id="KW-0479">Metal-binding</keyword>
<keyword id="KW-0496">Mitochondrion</keyword>
<keyword id="KW-0999">Mitochondrion inner membrane</keyword>
<keyword id="KW-0679">Respiratory chain</keyword>
<keyword id="KW-0812">Transmembrane</keyword>
<keyword id="KW-1133">Transmembrane helix</keyword>
<keyword id="KW-0813">Transport</keyword>
<keyword id="KW-0830">Ubiquinone</keyword>
<geneLocation type="mitochondrion"/>
<comment type="function">
    <text evidence="2">Component of the ubiquinol-cytochrome c reductase complex (complex III or cytochrome b-c1 complex) that is part of the mitochondrial respiratory chain. The b-c1 complex mediates electron transfer from ubiquinol to cytochrome c. Contributes to the generation of a proton gradient across the mitochondrial membrane that is then used for ATP synthesis.</text>
</comment>
<comment type="cofactor">
    <cofactor evidence="2">
        <name>heme b</name>
        <dbReference type="ChEBI" id="CHEBI:60344"/>
    </cofactor>
    <text evidence="2">Binds 2 heme b groups non-covalently.</text>
</comment>
<comment type="subunit">
    <text evidence="2">The cytochrome bc1 complex contains 11 subunits: 3 respiratory subunits (MT-CYB, CYC1 and UQCRFS1), 2 core proteins (UQCRC1 and UQCRC2) and 6 low-molecular weight proteins (UQCRH/QCR6, UQCRB/QCR7, UQCRQ/QCR8, UQCR10/QCR9, UQCR11/QCR10 and a cleavage product of UQCRFS1). This cytochrome bc1 complex then forms a dimer.</text>
</comment>
<comment type="subcellular location">
    <subcellularLocation>
        <location evidence="2">Mitochondrion inner membrane</location>
        <topology evidence="2">Multi-pass membrane protein</topology>
    </subcellularLocation>
</comment>
<comment type="miscellaneous">
    <text evidence="1">Heme 1 (or BL or b562) is low-potential and absorbs at about 562 nm, and heme 2 (or BH or b566) is high-potential and absorbs at about 566 nm.</text>
</comment>
<comment type="similarity">
    <text evidence="3 4">Belongs to the cytochrome b family.</text>
</comment>
<comment type="caution">
    <text evidence="2">The full-length protein contains only eight transmembrane helices, not nine as predicted by bioinformatics tools.</text>
</comment>
<protein>
    <recommendedName>
        <fullName>Cytochrome b</fullName>
    </recommendedName>
    <alternativeName>
        <fullName>Complex III subunit 3</fullName>
    </alternativeName>
    <alternativeName>
        <fullName>Complex III subunit III</fullName>
    </alternativeName>
    <alternativeName>
        <fullName>Cytochrome b-c1 complex subunit 3</fullName>
    </alternativeName>
    <alternativeName>
        <fullName>Ubiquinol-cytochrome-c reductase complex cytochrome b subunit</fullName>
    </alternativeName>
</protein>
<accession>O99338</accession>
<name>CYB_RAPSH</name>
<dbReference type="EMBL" id="AF022050">
    <property type="protein sequence ID" value="AAD13484.1"/>
    <property type="molecule type" value="Genomic_DNA"/>
</dbReference>
<dbReference type="SMR" id="O99338"/>
<dbReference type="GO" id="GO:0005743">
    <property type="term" value="C:mitochondrial inner membrane"/>
    <property type="evidence" value="ECO:0007669"/>
    <property type="project" value="UniProtKB-SubCell"/>
</dbReference>
<dbReference type="GO" id="GO:0045275">
    <property type="term" value="C:respiratory chain complex III"/>
    <property type="evidence" value="ECO:0007669"/>
    <property type="project" value="InterPro"/>
</dbReference>
<dbReference type="GO" id="GO:0046872">
    <property type="term" value="F:metal ion binding"/>
    <property type="evidence" value="ECO:0007669"/>
    <property type="project" value="UniProtKB-KW"/>
</dbReference>
<dbReference type="GO" id="GO:0008121">
    <property type="term" value="F:ubiquinol-cytochrome-c reductase activity"/>
    <property type="evidence" value="ECO:0007669"/>
    <property type="project" value="InterPro"/>
</dbReference>
<dbReference type="GO" id="GO:0006122">
    <property type="term" value="P:mitochondrial electron transport, ubiquinol to cytochrome c"/>
    <property type="evidence" value="ECO:0007669"/>
    <property type="project" value="TreeGrafter"/>
</dbReference>
<dbReference type="CDD" id="cd00290">
    <property type="entry name" value="cytochrome_b_C"/>
    <property type="match status" value="1"/>
</dbReference>
<dbReference type="CDD" id="cd00284">
    <property type="entry name" value="Cytochrome_b_N"/>
    <property type="match status" value="1"/>
</dbReference>
<dbReference type="FunFam" id="1.20.810.10:FF:000002">
    <property type="entry name" value="Cytochrome b"/>
    <property type="match status" value="1"/>
</dbReference>
<dbReference type="Gene3D" id="1.20.810.10">
    <property type="entry name" value="Cytochrome Bc1 Complex, Chain C"/>
    <property type="match status" value="1"/>
</dbReference>
<dbReference type="InterPro" id="IPR005798">
    <property type="entry name" value="Cyt_b/b6_C"/>
</dbReference>
<dbReference type="InterPro" id="IPR036150">
    <property type="entry name" value="Cyt_b/b6_C_sf"/>
</dbReference>
<dbReference type="InterPro" id="IPR005797">
    <property type="entry name" value="Cyt_b/b6_N"/>
</dbReference>
<dbReference type="InterPro" id="IPR027387">
    <property type="entry name" value="Cytb/b6-like_sf"/>
</dbReference>
<dbReference type="InterPro" id="IPR030689">
    <property type="entry name" value="Cytochrome_b"/>
</dbReference>
<dbReference type="InterPro" id="IPR048260">
    <property type="entry name" value="Cytochrome_b_C_euk/bac"/>
</dbReference>
<dbReference type="InterPro" id="IPR048259">
    <property type="entry name" value="Cytochrome_b_N_euk/bac"/>
</dbReference>
<dbReference type="InterPro" id="IPR016174">
    <property type="entry name" value="Di-haem_cyt_TM"/>
</dbReference>
<dbReference type="PANTHER" id="PTHR19271">
    <property type="entry name" value="CYTOCHROME B"/>
    <property type="match status" value="1"/>
</dbReference>
<dbReference type="PANTHER" id="PTHR19271:SF16">
    <property type="entry name" value="CYTOCHROME B"/>
    <property type="match status" value="1"/>
</dbReference>
<dbReference type="Pfam" id="PF00032">
    <property type="entry name" value="Cytochrom_B_C"/>
    <property type="match status" value="1"/>
</dbReference>
<dbReference type="Pfam" id="PF00033">
    <property type="entry name" value="Cytochrome_B"/>
    <property type="match status" value="1"/>
</dbReference>
<dbReference type="PIRSF" id="PIRSF038885">
    <property type="entry name" value="COB"/>
    <property type="match status" value="1"/>
</dbReference>
<dbReference type="SUPFAM" id="SSF81648">
    <property type="entry name" value="a domain/subunit of cytochrome bc1 complex (Ubiquinol-cytochrome c reductase)"/>
    <property type="match status" value="1"/>
</dbReference>
<dbReference type="SUPFAM" id="SSF81342">
    <property type="entry name" value="Transmembrane di-heme cytochromes"/>
    <property type="match status" value="1"/>
</dbReference>
<dbReference type="PROSITE" id="PS51003">
    <property type="entry name" value="CYTB_CTER"/>
    <property type="match status" value="1"/>
</dbReference>
<dbReference type="PROSITE" id="PS51002">
    <property type="entry name" value="CYTB_NTER"/>
    <property type="match status" value="1"/>
</dbReference>
<evidence type="ECO:0000250" key="1"/>
<evidence type="ECO:0000250" key="2">
    <source>
        <dbReference type="UniProtKB" id="P00157"/>
    </source>
</evidence>
<evidence type="ECO:0000255" key="3">
    <source>
        <dbReference type="PROSITE-ProRule" id="PRU00967"/>
    </source>
</evidence>
<evidence type="ECO:0000255" key="4">
    <source>
        <dbReference type="PROSITE-ProRule" id="PRU00968"/>
    </source>
</evidence>
<sequence>MTNIRKTHPLMKIVNNAFIDLPAPSNISSWWNFGSLLGICLILQILTGLFLAMHYTADTATAFSSVTHICRDVNYGWIIRYMHANGASMFFICLFMHVGRGLYYGSYTFLETWNVGVILLFATMATAFMGYVLPWGQMSFWGATVITNLLSAIPYIGTDLVEWIWGGFSVHKATLTRFFAFHFILPFIIAALAMVHLLFLHETGSNNPTGISSDMDKIPFHPYYTIKDILGALLLILTLMLLVLFVPDLLGDPDNYTPANPLNTPPHIKPEWYFLFAYAILLSIPNKLGGVLALVLSVLILVLMPLLHMSKQRSMMFRPISQCLFWILVADLLTLTWIGGQPVEHPYIIIGQLASIMYFTLILVLMPVASTIENNLLKW</sequence>
<gene>
    <name type="primary">MT-CYB</name>
    <name type="synonym">COB</name>
    <name type="synonym">CYTB</name>
    <name type="synonym">MTCYB</name>
</gene>
<proteinExistence type="inferred from homology"/>